<protein>
    <recommendedName>
        <fullName evidence="1">L-fucose isomerase</fullName>
        <ecNumber evidence="1">5.3.1.25</ecNumber>
    </recommendedName>
    <alternativeName>
        <fullName evidence="1">6-deoxy-L-galactose isomerase</fullName>
    </alternativeName>
    <alternativeName>
        <fullName>FucIase</fullName>
    </alternativeName>
</protein>
<proteinExistence type="inferred from homology"/>
<organism>
    <name type="scientific">Escherichia coli O17:K52:H18 (strain UMN026 / ExPEC)</name>
    <dbReference type="NCBI Taxonomy" id="585056"/>
    <lineage>
        <taxon>Bacteria</taxon>
        <taxon>Pseudomonadati</taxon>
        <taxon>Pseudomonadota</taxon>
        <taxon>Gammaproteobacteria</taxon>
        <taxon>Enterobacterales</taxon>
        <taxon>Enterobacteriaceae</taxon>
        <taxon>Escherichia</taxon>
    </lineage>
</organism>
<keyword id="KW-0119">Carbohydrate metabolism</keyword>
<keyword id="KW-0963">Cytoplasm</keyword>
<keyword id="KW-0294">Fucose metabolism</keyword>
<keyword id="KW-0413">Isomerase</keyword>
<keyword id="KW-0464">Manganese</keyword>
<keyword id="KW-0479">Metal-binding</keyword>
<reference key="1">
    <citation type="journal article" date="2009" name="PLoS Genet.">
        <title>Organised genome dynamics in the Escherichia coli species results in highly diverse adaptive paths.</title>
        <authorList>
            <person name="Touchon M."/>
            <person name="Hoede C."/>
            <person name="Tenaillon O."/>
            <person name="Barbe V."/>
            <person name="Baeriswyl S."/>
            <person name="Bidet P."/>
            <person name="Bingen E."/>
            <person name="Bonacorsi S."/>
            <person name="Bouchier C."/>
            <person name="Bouvet O."/>
            <person name="Calteau A."/>
            <person name="Chiapello H."/>
            <person name="Clermont O."/>
            <person name="Cruveiller S."/>
            <person name="Danchin A."/>
            <person name="Diard M."/>
            <person name="Dossat C."/>
            <person name="Karoui M.E."/>
            <person name="Frapy E."/>
            <person name="Garry L."/>
            <person name="Ghigo J.M."/>
            <person name="Gilles A.M."/>
            <person name="Johnson J."/>
            <person name="Le Bouguenec C."/>
            <person name="Lescat M."/>
            <person name="Mangenot S."/>
            <person name="Martinez-Jehanne V."/>
            <person name="Matic I."/>
            <person name="Nassif X."/>
            <person name="Oztas S."/>
            <person name="Petit M.A."/>
            <person name="Pichon C."/>
            <person name="Rouy Z."/>
            <person name="Ruf C.S."/>
            <person name="Schneider D."/>
            <person name="Tourret J."/>
            <person name="Vacherie B."/>
            <person name="Vallenet D."/>
            <person name="Medigue C."/>
            <person name="Rocha E.P.C."/>
            <person name="Denamur E."/>
        </authorList>
    </citation>
    <scope>NUCLEOTIDE SEQUENCE [LARGE SCALE GENOMIC DNA]</scope>
    <source>
        <strain>UMN026 / ExPEC</strain>
    </source>
</reference>
<accession>B7N736</accession>
<name>FUCI_ECOLU</name>
<comment type="function">
    <text evidence="1">Converts the aldose L-fucose into the corresponding ketose L-fuculose.</text>
</comment>
<comment type="catalytic activity">
    <reaction evidence="1">
        <text>L-fucose = L-fuculose</text>
        <dbReference type="Rhea" id="RHEA:17233"/>
        <dbReference type="ChEBI" id="CHEBI:2181"/>
        <dbReference type="ChEBI" id="CHEBI:17617"/>
        <dbReference type="EC" id="5.3.1.25"/>
    </reaction>
</comment>
<comment type="cofactor">
    <cofactor evidence="1">
        <name>Mn(2+)</name>
        <dbReference type="ChEBI" id="CHEBI:29035"/>
    </cofactor>
</comment>
<comment type="pathway">
    <text evidence="1">Carbohydrate degradation; L-fucose degradation; L-lactaldehyde and glycerone phosphate from L-fucose: step 1/3.</text>
</comment>
<comment type="subunit">
    <text evidence="1">Homohexamer.</text>
</comment>
<comment type="subcellular location">
    <subcellularLocation>
        <location evidence="1">Cytoplasm</location>
    </subcellularLocation>
</comment>
<comment type="similarity">
    <text evidence="1">Belongs to the L-fucose isomerase family.</text>
</comment>
<gene>
    <name evidence="1" type="primary">fucI</name>
    <name type="ordered locus">ECUMN_3131</name>
</gene>
<evidence type="ECO:0000255" key="1">
    <source>
        <dbReference type="HAMAP-Rule" id="MF_01254"/>
    </source>
</evidence>
<sequence length="591" mass="65007">MKKISLPKIGIRPVIDGRRMGVRESLEEQTMNMAKATAALLTEKLRHACGAAVECVISDTCIAGMAEAAACEEKFSSQNVGLTITVTPCWCYGSETIDMDPTRPKAIWGFNGTERPGAVYLAAALAAHSQKGIPAFSIYGHDVQDADDTSIPADVEEKLLRFARAGLAVASMKGKSYLSLGGVSMGIAGSIVDHNFFESWLGMKVQAVDMTELRRRIDQKIYDEAELEMALAWADKNFRYGEDENNKQYQRNAEQSRAVLRESLLMAMCIRDMMQGNSKLTDIGRVEESLGYNAIAAGFQGQRHWTDQYPNGDTAEAILNSSFDWNGVREPFVVATENDSLNGVAMLMGHQLTGTAQVFADVRTYWSPEAIERVTGHKLDGLAEHGIIHLINSGSAALDGSCKQRDSEGNPTMKPHWEISQQEADACLAATEWCPAIHEYFRGGGYSSRFLTEGGVPFTMTRVNIIKGLGPVLQIAEGWSVELPKDVHDILNKRTNSTWPTTWFAPRLTGKGPFTDVYSVMANWGANHGVLTIGHVGADFITLASMLRIPVCMHNVEETKVYRPSAWAAHGMDIEGQDYRACQNYGPLYKR</sequence>
<dbReference type="EC" id="5.3.1.25" evidence="1"/>
<dbReference type="EMBL" id="CU928163">
    <property type="protein sequence ID" value="CAR14297.1"/>
    <property type="molecule type" value="Genomic_DNA"/>
</dbReference>
<dbReference type="RefSeq" id="WP_000724167.1">
    <property type="nucleotide sequence ID" value="NC_011751.1"/>
</dbReference>
<dbReference type="RefSeq" id="YP_002413817.1">
    <property type="nucleotide sequence ID" value="NC_011751.1"/>
</dbReference>
<dbReference type="SMR" id="B7N736"/>
<dbReference type="STRING" id="585056.ECUMN_3131"/>
<dbReference type="KEGG" id="eum:ECUMN_3131"/>
<dbReference type="PATRIC" id="fig|585056.7.peg.3313"/>
<dbReference type="HOGENOM" id="CLU_033326_1_0_6"/>
<dbReference type="UniPathway" id="UPA00563">
    <property type="reaction ID" value="UER00624"/>
</dbReference>
<dbReference type="Proteomes" id="UP000007097">
    <property type="component" value="Chromosome"/>
</dbReference>
<dbReference type="GO" id="GO:0005737">
    <property type="term" value="C:cytoplasm"/>
    <property type="evidence" value="ECO:0007669"/>
    <property type="project" value="UniProtKB-SubCell"/>
</dbReference>
<dbReference type="GO" id="GO:0008790">
    <property type="term" value="F:arabinose isomerase activity"/>
    <property type="evidence" value="ECO:0007669"/>
    <property type="project" value="TreeGrafter"/>
</dbReference>
<dbReference type="GO" id="GO:0008736">
    <property type="term" value="F:L-fucose isomerase activity"/>
    <property type="evidence" value="ECO:0007669"/>
    <property type="project" value="UniProtKB-UniRule"/>
</dbReference>
<dbReference type="GO" id="GO:0030145">
    <property type="term" value="F:manganese ion binding"/>
    <property type="evidence" value="ECO:0007669"/>
    <property type="project" value="UniProtKB-UniRule"/>
</dbReference>
<dbReference type="GO" id="GO:0019571">
    <property type="term" value="P:D-arabinose catabolic process"/>
    <property type="evidence" value="ECO:0007669"/>
    <property type="project" value="TreeGrafter"/>
</dbReference>
<dbReference type="GO" id="GO:0042355">
    <property type="term" value="P:L-fucose catabolic process"/>
    <property type="evidence" value="ECO:0007669"/>
    <property type="project" value="UniProtKB-UniRule"/>
</dbReference>
<dbReference type="CDD" id="cd03556">
    <property type="entry name" value="L-fucose_isomerase"/>
    <property type="match status" value="1"/>
</dbReference>
<dbReference type="FunFam" id="3.20.14.10:FF:000001">
    <property type="entry name" value="L-fucose isomerase"/>
    <property type="match status" value="1"/>
</dbReference>
<dbReference type="FunFam" id="3.40.275.10:FF:000001">
    <property type="entry name" value="L-fucose isomerase"/>
    <property type="match status" value="1"/>
</dbReference>
<dbReference type="FunFam" id="3.40.50.1070:FF:000001">
    <property type="entry name" value="L-fucose isomerase"/>
    <property type="match status" value="1"/>
</dbReference>
<dbReference type="Gene3D" id="3.40.50.1070">
    <property type="match status" value="1"/>
</dbReference>
<dbReference type="Gene3D" id="3.40.275.10">
    <property type="entry name" value="L-fucose Isomerase, Chain A, domain 2"/>
    <property type="match status" value="1"/>
</dbReference>
<dbReference type="Gene3D" id="3.20.14.10">
    <property type="entry name" value="L-fucose/L-arabinose isomerase, C-terminal"/>
    <property type="match status" value="1"/>
</dbReference>
<dbReference type="HAMAP" id="MF_01254">
    <property type="entry name" value="Fucose_iso"/>
    <property type="match status" value="1"/>
</dbReference>
<dbReference type="InterPro" id="IPR004216">
    <property type="entry name" value="Fuc/Ara_isomerase_C"/>
</dbReference>
<dbReference type="InterPro" id="IPR038393">
    <property type="entry name" value="Fuc_iso_dom3_sf"/>
</dbReference>
<dbReference type="InterPro" id="IPR015888">
    <property type="entry name" value="Fuc_isomerase_C"/>
</dbReference>
<dbReference type="InterPro" id="IPR038391">
    <property type="entry name" value="Fucose_iso_dom1_sf"/>
</dbReference>
<dbReference type="InterPro" id="IPR012888">
    <property type="entry name" value="Fucose_iso_N1"/>
</dbReference>
<dbReference type="InterPro" id="IPR005763">
    <property type="entry name" value="Fucose_isomerase"/>
</dbReference>
<dbReference type="InterPro" id="IPR038392">
    <property type="entry name" value="Fucose_isomerase_dom2_sf"/>
</dbReference>
<dbReference type="InterPro" id="IPR009015">
    <property type="entry name" value="Fucose_isomerase_N/cen_sf"/>
</dbReference>
<dbReference type="InterPro" id="IPR012889">
    <property type="entry name" value="Fucose_isomerase_N2"/>
</dbReference>
<dbReference type="NCBIfam" id="TIGR01089">
    <property type="entry name" value="fucI"/>
    <property type="match status" value="1"/>
</dbReference>
<dbReference type="NCBIfam" id="NF008220">
    <property type="entry name" value="PRK10991.1"/>
    <property type="match status" value="1"/>
</dbReference>
<dbReference type="PANTHER" id="PTHR37840">
    <property type="entry name" value="L-FUCOSE ISOMERASE"/>
    <property type="match status" value="1"/>
</dbReference>
<dbReference type="PANTHER" id="PTHR37840:SF1">
    <property type="entry name" value="L-FUCOSE ISOMERASE"/>
    <property type="match status" value="1"/>
</dbReference>
<dbReference type="Pfam" id="PF02952">
    <property type="entry name" value="Fucose_iso_C"/>
    <property type="match status" value="1"/>
</dbReference>
<dbReference type="Pfam" id="PF07881">
    <property type="entry name" value="Fucose_iso_N1"/>
    <property type="match status" value="1"/>
</dbReference>
<dbReference type="Pfam" id="PF07882">
    <property type="entry name" value="Fucose_iso_N2"/>
    <property type="match status" value="1"/>
</dbReference>
<dbReference type="SUPFAM" id="SSF50443">
    <property type="entry name" value="FucI/AraA C-terminal domain-like"/>
    <property type="match status" value="1"/>
</dbReference>
<dbReference type="SUPFAM" id="SSF53743">
    <property type="entry name" value="FucI/AraA N-terminal and middle domains"/>
    <property type="match status" value="1"/>
</dbReference>
<feature type="chain" id="PRO_1000139953" description="L-fucose isomerase">
    <location>
        <begin position="1"/>
        <end position="591"/>
    </location>
</feature>
<feature type="active site" description="Proton acceptor" evidence="1">
    <location>
        <position position="337"/>
    </location>
</feature>
<feature type="active site" description="Proton acceptor" evidence="1">
    <location>
        <position position="361"/>
    </location>
</feature>
<feature type="binding site" evidence="1">
    <location>
        <position position="337"/>
    </location>
    <ligand>
        <name>Mn(2+)</name>
        <dbReference type="ChEBI" id="CHEBI:29035"/>
    </ligand>
</feature>
<feature type="binding site" evidence="1">
    <location>
        <position position="361"/>
    </location>
    <ligand>
        <name>Mn(2+)</name>
        <dbReference type="ChEBI" id="CHEBI:29035"/>
    </ligand>
</feature>
<feature type="binding site" evidence="1">
    <location>
        <position position="528"/>
    </location>
    <ligand>
        <name>Mn(2+)</name>
        <dbReference type="ChEBI" id="CHEBI:29035"/>
    </ligand>
</feature>